<proteinExistence type="inferred from homology"/>
<reference key="1">
    <citation type="submission" date="2006-08" db="EMBL/GenBank/DDBJ databases">
        <title>Complete sequence of Shewanella sp. MR-4.</title>
        <authorList>
            <consortium name="US DOE Joint Genome Institute"/>
            <person name="Copeland A."/>
            <person name="Lucas S."/>
            <person name="Lapidus A."/>
            <person name="Barry K."/>
            <person name="Detter J.C."/>
            <person name="Glavina del Rio T."/>
            <person name="Hammon N."/>
            <person name="Israni S."/>
            <person name="Dalin E."/>
            <person name="Tice H."/>
            <person name="Pitluck S."/>
            <person name="Kiss H."/>
            <person name="Brettin T."/>
            <person name="Bruce D."/>
            <person name="Han C."/>
            <person name="Tapia R."/>
            <person name="Gilna P."/>
            <person name="Schmutz J."/>
            <person name="Larimer F."/>
            <person name="Land M."/>
            <person name="Hauser L."/>
            <person name="Kyrpides N."/>
            <person name="Mikhailova N."/>
            <person name="Nealson K."/>
            <person name="Konstantinidis K."/>
            <person name="Klappenbach J."/>
            <person name="Tiedje J."/>
            <person name="Richardson P."/>
        </authorList>
    </citation>
    <scope>NUCLEOTIDE SEQUENCE [LARGE SCALE GENOMIC DNA]</scope>
    <source>
        <strain>MR-4</strain>
    </source>
</reference>
<evidence type="ECO:0000255" key="1">
    <source>
        <dbReference type="HAMAP-Rule" id="MF_01183"/>
    </source>
</evidence>
<keyword id="KW-0143">Chaperone</keyword>
<keyword id="KW-0413">Isomerase</keyword>
<keyword id="KW-0574">Periplasm</keyword>
<keyword id="KW-0677">Repeat</keyword>
<keyword id="KW-0697">Rotamase</keyword>
<keyword id="KW-0732">Signal</keyword>
<accession>Q0HLT0</accession>
<organism>
    <name type="scientific">Shewanella sp. (strain MR-4)</name>
    <dbReference type="NCBI Taxonomy" id="60480"/>
    <lineage>
        <taxon>Bacteria</taxon>
        <taxon>Pseudomonadati</taxon>
        <taxon>Pseudomonadota</taxon>
        <taxon>Gammaproteobacteria</taxon>
        <taxon>Alteromonadales</taxon>
        <taxon>Shewanellaceae</taxon>
        <taxon>Shewanella</taxon>
    </lineage>
</organism>
<sequence>MKPSKHLIFALFALAISQPTMAAPQPIDRVAVQINDGIVLESEITNMIDTVKANARAANQSLPSDSALRTQVIERLILTRLQLQMADRIGLHIGDLQLDQAIENIAREQKMTVAQMQQKIESEGLSFGQYREQLREEITLGEIQRIQVQRRIQVSPQEITGLVKLIQEQGMKDVEYQIGHILIDVPNNPNSEQLEASSKRANAVLERLKSGEDFRRTAIASSSGPKALEGGIWDYMNINEMPTLFAEVINGAKKGDIIGPIKSGAGFHIIKIMDARGLQTKEIEEVRARHILLKPSPILSEDRAKAMLEQFLKQIRSGEAKFEDLARQYSEDPGSAAKGGELGWAEPSIYVPEFAQTLNSLSQDQISEPFRTTHGWHITQLEERRKTDATDQFNTNRAHQLIFRRKFNEELQNWLDEMRADAYIEVFQPESNRG</sequence>
<dbReference type="EC" id="5.2.1.8" evidence="1"/>
<dbReference type="EMBL" id="CP000446">
    <property type="protein sequence ID" value="ABI37987.1"/>
    <property type="molecule type" value="Genomic_DNA"/>
</dbReference>
<dbReference type="RefSeq" id="WP_011621702.1">
    <property type="nucleotide sequence ID" value="NC_008321.1"/>
</dbReference>
<dbReference type="SMR" id="Q0HLT0"/>
<dbReference type="KEGG" id="she:Shewmr4_0907"/>
<dbReference type="HOGENOM" id="CLU_034646_11_0_6"/>
<dbReference type="GO" id="GO:0030288">
    <property type="term" value="C:outer membrane-bounded periplasmic space"/>
    <property type="evidence" value="ECO:0007669"/>
    <property type="project" value="InterPro"/>
</dbReference>
<dbReference type="GO" id="GO:0042277">
    <property type="term" value="F:peptide binding"/>
    <property type="evidence" value="ECO:0007669"/>
    <property type="project" value="InterPro"/>
</dbReference>
<dbReference type="GO" id="GO:0003755">
    <property type="term" value="F:peptidyl-prolyl cis-trans isomerase activity"/>
    <property type="evidence" value="ECO:0007669"/>
    <property type="project" value="UniProtKB-UniRule"/>
</dbReference>
<dbReference type="GO" id="GO:0051082">
    <property type="term" value="F:unfolded protein binding"/>
    <property type="evidence" value="ECO:0007669"/>
    <property type="project" value="UniProtKB-UniRule"/>
</dbReference>
<dbReference type="GO" id="GO:0043165">
    <property type="term" value="P:Gram-negative-bacterium-type cell outer membrane assembly"/>
    <property type="evidence" value="ECO:0007669"/>
    <property type="project" value="InterPro"/>
</dbReference>
<dbReference type="GO" id="GO:0006457">
    <property type="term" value="P:protein folding"/>
    <property type="evidence" value="ECO:0007669"/>
    <property type="project" value="UniProtKB-UniRule"/>
</dbReference>
<dbReference type="GO" id="GO:0050821">
    <property type="term" value="P:protein stabilization"/>
    <property type="evidence" value="ECO:0007669"/>
    <property type="project" value="InterPro"/>
</dbReference>
<dbReference type="Gene3D" id="3.10.50.40">
    <property type="match status" value="2"/>
</dbReference>
<dbReference type="Gene3D" id="1.10.4030.10">
    <property type="entry name" value="Porin chaperone SurA, peptide-binding domain"/>
    <property type="match status" value="1"/>
</dbReference>
<dbReference type="HAMAP" id="MF_01183">
    <property type="entry name" value="Chaperone_SurA"/>
    <property type="match status" value="1"/>
</dbReference>
<dbReference type="InterPro" id="IPR050280">
    <property type="entry name" value="OMP_Chaperone_SurA"/>
</dbReference>
<dbReference type="InterPro" id="IPR046357">
    <property type="entry name" value="PPIase_dom_sf"/>
</dbReference>
<dbReference type="InterPro" id="IPR000297">
    <property type="entry name" value="PPIase_PpiC"/>
</dbReference>
<dbReference type="InterPro" id="IPR023058">
    <property type="entry name" value="PPIase_PpiC_CS"/>
</dbReference>
<dbReference type="InterPro" id="IPR023034">
    <property type="entry name" value="PPIase_SurA"/>
</dbReference>
<dbReference type="InterPro" id="IPR015391">
    <property type="entry name" value="SurA_N"/>
</dbReference>
<dbReference type="InterPro" id="IPR027304">
    <property type="entry name" value="Trigger_fact/SurA_dom_sf"/>
</dbReference>
<dbReference type="NCBIfam" id="NF008038">
    <property type="entry name" value="PRK10770.1"/>
    <property type="match status" value="1"/>
</dbReference>
<dbReference type="PANTHER" id="PTHR47637">
    <property type="entry name" value="CHAPERONE SURA"/>
    <property type="match status" value="1"/>
</dbReference>
<dbReference type="PANTHER" id="PTHR47637:SF1">
    <property type="entry name" value="CHAPERONE SURA"/>
    <property type="match status" value="1"/>
</dbReference>
<dbReference type="Pfam" id="PF00639">
    <property type="entry name" value="Rotamase"/>
    <property type="match status" value="2"/>
</dbReference>
<dbReference type="Pfam" id="PF09312">
    <property type="entry name" value="SurA_N"/>
    <property type="match status" value="1"/>
</dbReference>
<dbReference type="SUPFAM" id="SSF54534">
    <property type="entry name" value="FKBP-like"/>
    <property type="match status" value="2"/>
</dbReference>
<dbReference type="SUPFAM" id="SSF109998">
    <property type="entry name" value="Triger factor/SurA peptide-binding domain-like"/>
    <property type="match status" value="1"/>
</dbReference>
<dbReference type="PROSITE" id="PS01096">
    <property type="entry name" value="PPIC_PPIASE_1"/>
    <property type="match status" value="1"/>
</dbReference>
<dbReference type="PROSITE" id="PS50198">
    <property type="entry name" value="PPIC_PPIASE_2"/>
    <property type="match status" value="2"/>
</dbReference>
<protein>
    <recommendedName>
        <fullName evidence="1">Chaperone SurA</fullName>
    </recommendedName>
    <alternativeName>
        <fullName evidence="1">Peptidyl-prolyl cis-trans isomerase SurA</fullName>
        <shortName evidence="1">PPIase SurA</shortName>
        <ecNumber evidence="1">5.2.1.8</ecNumber>
    </alternativeName>
    <alternativeName>
        <fullName evidence="1">Rotamase SurA</fullName>
    </alternativeName>
</protein>
<comment type="function">
    <text evidence="1">Chaperone involved in the correct folding and assembly of outer membrane proteins. Recognizes specific patterns of aromatic residues and the orientation of their side chains, which are found more frequently in integral outer membrane proteins. May act in both early periplasmic and late outer membrane-associated steps of protein maturation.</text>
</comment>
<comment type="catalytic activity">
    <reaction evidence="1">
        <text>[protein]-peptidylproline (omega=180) = [protein]-peptidylproline (omega=0)</text>
        <dbReference type="Rhea" id="RHEA:16237"/>
        <dbReference type="Rhea" id="RHEA-COMP:10747"/>
        <dbReference type="Rhea" id="RHEA-COMP:10748"/>
        <dbReference type="ChEBI" id="CHEBI:83833"/>
        <dbReference type="ChEBI" id="CHEBI:83834"/>
        <dbReference type="EC" id="5.2.1.8"/>
    </reaction>
</comment>
<comment type="subcellular location">
    <subcellularLocation>
        <location evidence="1">Periplasm</location>
    </subcellularLocation>
    <text evidence="1">Is capable of associating with the outer membrane.</text>
</comment>
<comment type="domain">
    <text evidence="1">The PPIase activity resides only in the second parvulin domain. The N-terminal region and the C-terminal tail are necessary and sufficient for the chaperone activity of SurA. The PPIase activity is dispensable for SurA to function as a chaperone. The N-terminal region and the C-terminal tail are also required for porin recognition.</text>
</comment>
<feature type="signal peptide" evidence="1">
    <location>
        <begin position="1"/>
        <end position="22"/>
    </location>
</feature>
<feature type="chain" id="PRO_5000129609" description="Chaperone SurA">
    <location>
        <begin position="23"/>
        <end position="434"/>
    </location>
</feature>
<feature type="domain" description="PpiC 1" evidence="1">
    <location>
        <begin position="173"/>
        <end position="274"/>
    </location>
</feature>
<feature type="domain" description="PpiC 2" evidence="1">
    <location>
        <begin position="283"/>
        <end position="383"/>
    </location>
</feature>
<name>SURA_SHESM</name>
<gene>
    <name evidence="1" type="primary">surA</name>
    <name type="ordered locus">Shewmr4_0907</name>
</gene>